<proteinExistence type="inferred from homology"/>
<reference key="1">
    <citation type="journal article" date="2009" name="BMC Genomics">
        <title>Metabolic analysis of the soil microbe Dechloromonas aromatica str. RCB: indications of a surprisingly complex life-style and cryptic anaerobic pathways for aromatic degradation.</title>
        <authorList>
            <person name="Salinero K.K."/>
            <person name="Keller K."/>
            <person name="Feil W.S."/>
            <person name="Feil H."/>
            <person name="Trong S."/>
            <person name="Di Bartolo G."/>
            <person name="Lapidus A."/>
        </authorList>
    </citation>
    <scope>NUCLEOTIDE SEQUENCE [LARGE SCALE GENOMIC DNA]</scope>
    <source>
        <strain>RCB</strain>
    </source>
</reference>
<protein>
    <recommendedName>
        <fullName evidence="1">Small ribosomal subunit protein bS20</fullName>
    </recommendedName>
    <alternativeName>
        <fullName evidence="3">30S ribosomal protein S20</fullName>
    </alternativeName>
</protein>
<accession>Q47BL6</accession>
<dbReference type="EMBL" id="CP000089">
    <property type="protein sequence ID" value="AAZ47765.1"/>
    <property type="molecule type" value="Genomic_DNA"/>
</dbReference>
<dbReference type="SMR" id="Q47BL6"/>
<dbReference type="STRING" id="159087.Daro_3035"/>
<dbReference type="KEGG" id="dar:Daro_3035"/>
<dbReference type="eggNOG" id="COG0268">
    <property type="taxonomic scope" value="Bacteria"/>
</dbReference>
<dbReference type="HOGENOM" id="CLU_160655_4_0_4"/>
<dbReference type="OrthoDB" id="9807974at2"/>
<dbReference type="GO" id="GO:0005829">
    <property type="term" value="C:cytosol"/>
    <property type="evidence" value="ECO:0007669"/>
    <property type="project" value="TreeGrafter"/>
</dbReference>
<dbReference type="GO" id="GO:0015935">
    <property type="term" value="C:small ribosomal subunit"/>
    <property type="evidence" value="ECO:0007669"/>
    <property type="project" value="TreeGrafter"/>
</dbReference>
<dbReference type="GO" id="GO:0070181">
    <property type="term" value="F:small ribosomal subunit rRNA binding"/>
    <property type="evidence" value="ECO:0007669"/>
    <property type="project" value="TreeGrafter"/>
</dbReference>
<dbReference type="GO" id="GO:0003735">
    <property type="term" value="F:structural constituent of ribosome"/>
    <property type="evidence" value="ECO:0007669"/>
    <property type="project" value="InterPro"/>
</dbReference>
<dbReference type="GO" id="GO:0006412">
    <property type="term" value="P:translation"/>
    <property type="evidence" value="ECO:0007669"/>
    <property type="project" value="UniProtKB-UniRule"/>
</dbReference>
<dbReference type="FunFam" id="1.20.58.110:FF:000001">
    <property type="entry name" value="30S ribosomal protein S20"/>
    <property type="match status" value="1"/>
</dbReference>
<dbReference type="Gene3D" id="1.20.58.110">
    <property type="entry name" value="Ribosomal protein S20"/>
    <property type="match status" value="1"/>
</dbReference>
<dbReference type="HAMAP" id="MF_00500">
    <property type="entry name" value="Ribosomal_bS20"/>
    <property type="match status" value="1"/>
</dbReference>
<dbReference type="InterPro" id="IPR002583">
    <property type="entry name" value="Ribosomal_bS20"/>
</dbReference>
<dbReference type="InterPro" id="IPR036510">
    <property type="entry name" value="Ribosomal_bS20_sf"/>
</dbReference>
<dbReference type="NCBIfam" id="TIGR00029">
    <property type="entry name" value="S20"/>
    <property type="match status" value="1"/>
</dbReference>
<dbReference type="PANTHER" id="PTHR33398">
    <property type="entry name" value="30S RIBOSOMAL PROTEIN S20"/>
    <property type="match status" value="1"/>
</dbReference>
<dbReference type="PANTHER" id="PTHR33398:SF1">
    <property type="entry name" value="SMALL RIBOSOMAL SUBUNIT PROTEIN BS20C"/>
    <property type="match status" value="1"/>
</dbReference>
<dbReference type="Pfam" id="PF01649">
    <property type="entry name" value="Ribosomal_S20p"/>
    <property type="match status" value="1"/>
</dbReference>
<dbReference type="SUPFAM" id="SSF46992">
    <property type="entry name" value="Ribosomal protein S20"/>
    <property type="match status" value="1"/>
</dbReference>
<keyword id="KW-0687">Ribonucleoprotein</keyword>
<keyword id="KW-0689">Ribosomal protein</keyword>
<keyword id="KW-0694">RNA-binding</keyword>
<keyword id="KW-0699">rRNA-binding</keyword>
<feature type="chain" id="PRO_0000224963" description="Small ribosomal subunit protein bS20">
    <location>
        <begin position="1"/>
        <end position="89"/>
    </location>
</feature>
<feature type="region of interest" description="Disordered" evidence="2">
    <location>
        <begin position="1"/>
        <end position="26"/>
    </location>
</feature>
<sequence>MANSAQARKRARQADGQRSHNASLRSTLRTAIKRVRQAIEAGDKAAAQGVFQQSVAVLDRIADKKIVHKNKASRTKSRLSAQIKALAAA</sequence>
<evidence type="ECO:0000255" key="1">
    <source>
        <dbReference type="HAMAP-Rule" id="MF_00500"/>
    </source>
</evidence>
<evidence type="ECO:0000256" key="2">
    <source>
        <dbReference type="SAM" id="MobiDB-lite"/>
    </source>
</evidence>
<evidence type="ECO:0000305" key="3"/>
<name>RS20_DECAR</name>
<organism>
    <name type="scientific">Dechloromonas aromatica (strain RCB)</name>
    <dbReference type="NCBI Taxonomy" id="159087"/>
    <lineage>
        <taxon>Bacteria</taxon>
        <taxon>Pseudomonadati</taxon>
        <taxon>Pseudomonadota</taxon>
        <taxon>Betaproteobacteria</taxon>
        <taxon>Rhodocyclales</taxon>
        <taxon>Azonexaceae</taxon>
        <taxon>Dechloromonas</taxon>
    </lineage>
</organism>
<comment type="function">
    <text evidence="1">Binds directly to 16S ribosomal RNA.</text>
</comment>
<comment type="similarity">
    <text evidence="1">Belongs to the bacterial ribosomal protein bS20 family.</text>
</comment>
<gene>
    <name evidence="1" type="primary">rpsT</name>
    <name type="ordered locus">Daro_3035</name>
</gene>